<gene>
    <name type="primary">OPT8</name>
    <name type="ordered locus">At5g53520</name>
    <name type="ORF">MNC6.6</name>
</gene>
<evidence type="ECO:0000250" key="1"/>
<evidence type="ECO:0000255" key="2"/>
<evidence type="ECO:0000269" key="3">
    <source>
    </source>
</evidence>
<evidence type="ECO:0000305" key="4"/>
<keyword id="KW-0472">Membrane</keyword>
<keyword id="KW-0571">Peptide transport</keyword>
<keyword id="KW-0653">Protein transport</keyword>
<keyword id="KW-1185">Reference proteome</keyword>
<keyword id="KW-0812">Transmembrane</keyword>
<keyword id="KW-1133">Transmembrane helix</keyword>
<keyword id="KW-0813">Transport</keyword>
<dbReference type="EMBL" id="AB015476">
    <property type="protein sequence ID" value="BAB09728.1"/>
    <property type="molecule type" value="Genomic_DNA"/>
</dbReference>
<dbReference type="EMBL" id="CP002688">
    <property type="protein sequence ID" value="AED96372.1"/>
    <property type="molecule type" value="Genomic_DNA"/>
</dbReference>
<dbReference type="EMBL" id="DQ447070">
    <property type="protein sequence ID" value="ABE66245.1"/>
    <property type="molecule type" value="mRNA"/>
</dbReference>
<dbReference type="RefSeq" id="NP_200164.1">
    <property type="nucleotide sequence ID" value="NM_124732.2"/>
</dbReference>
<dbReference type="FunCoup" id="Q9FJD1">
    <property type="interactions" value="144"/>
</dbReference>
<dbReference type="STRING" id="3702.Q9FJD1"/>
<dbReference type="PaxDb" id="3702-AT5G53520.1"/>
<dbReference type="EnsemblPlants" id="AT5G53520.1">
    <property type="protein sequence ID" value="AT5G53520.1"/>
    <property type="gene ID" value="AT5G53520"/>
</dbReference>
<dbReference type="GeneID" id="835434"/>
<dbReference type="Gramene" id="AT5G53520.1">
    <property type="protein sequence ID" value="AT5G53520.1"/>
    <property type="gene ID" value="AT5G53520"/>
</dbReference>
<dbReference type="KEGG" id="ath:AT5G53520"/>
<dbReference type="Araport" id="AT5G53520"/>
<dbReference type="TAIR" id="AT5G53520">
    <property type="gene designation" value="OPT8"/>
</dbReference>
<dbReference type="eggNOG" id="KOG2262">
    <property type="taxonomic scope" value="Eukaryota"/>
</dbReference>
<dbReference type="HOGENOM" id="CLU_004965_0_1_1"/>
<dbReference type="InParanoid" id="Q9FJD1"/>
<dbReference type="OMA" id="DTGMPIW"/>
<dbReference type="PhylomeDB" id="Q9FJD1"/>
<dbReference type="PRO" id="PR:Q9FJD1"/>
<dbReference type="Proteomes" id="UP000006548">
    <property type="component" value="Chromosome 5"/>
</dbReference>
<dbReference type="ExpressionAtlas" id="Q9FJD1">
    <property type="expression patterns" value="baseline and differential"/>
</dbReference>
<dbReference type="GO" id="GO:0016020">
    <property type="term" value="C:membrane"/>
    <property type="evidence" value="ECO:0000250"/>
    <property type="project" value="TAIR"/>
</dbReference>
<dbReference type="GO" id="GO:0035673">
    <property type="term" value="F:oligopeptide transmembrane transporter activity"/>
    <property type="evidence" value="ECO:0007669"/>
    <property type="project" value="InterPro"/>
</dbReference>
<dbReference type="GO" id="GO:0048235">
    <property type="term" value="P:pollen sperm cell differentiation"/>
    <property type="evidence" value="ECO:0000270"/>
    <property type="project" value="TAIR"/>
</dbReference>
<dbReference type="GO" id="GO:0015031">
    <property type="term" value="P:protein transport"/>
    <property type="evidence" value="ECO:0007669"/>
    <property type="project" value="UniProtKB-KW"/>
</dbReference>
<dbReference type="InterPro" id="IPR004648">
    <property type="entry name" value="Oligpept_transpt"/>
</dbReference>
<dbReference type="InterPro" id="IPR004813">
    <property type="entry name" value="OPT"/>
</dbReference>
<dbReference type="NCBIfam" id="TIGR00727">
    <property type="entry name" value="ISP4_OPT"/>
    <property type="match status" value="1"/>
</dbReference>
<dbReference type="NCBIfam" id="TIGR00728">
    <property type="entry name" value="OPT_sfam"/>
    <property type="match status" value="1"/>
</dbReference>
<dbReference type="PANTHER" id="PTHR22601">
    <property type="entry name" value="ISP4 LIKE PROTEIN"/>
    <property type="match status" value="1"/>
</dbReference>
<dbReference type="Pfam" id="PF03169">
    <property type="entry name" value="OPT"/>
    <property type="match status" value="1"/>
</dbReference>
<feature type="chain" id="PRO_0000213785" description="Oligopeptide transporter 8">
    <location>
        <begin position="1"/>
        <end position="733"/>
    </location>
</feature>
<feature type="transmembrane region" description="Helical" evidence="2">
    <location>
        <begin position="42"/>
        <end position="62"/>
    </location>
</feature>
<feature type="transmembrane region" description="Helical" evidence="2">
    <location>
        <begin position="66"/>
        <end position="86"/>
    </location>
</feature>
<feature type="transmembrane region" description="Helical" evidence="2">
    <location>
        <begin position="115"/>
        <end position="135"/>
    </location>
</feature>
<feature type="transmembrane region" description="Helical" evidence="2">
    <location>
        <begin position="147"/>
        <end position="167"/>
    </location>
</feature>
<feature type="transmembrane region" description="Helical" evidence="2">
    <location>
        <begin position="209"/>
        <end position="229"/>
    </location>
</feature>
<feature type="transmembrane region" description="Helical" evidence="2">
    <location>
        <begin position="244"/>
        <end position="264"/>
    </location>
</feature>
<feature type="transmembrane region" description="Helical" evidence="2">
    <location>
        <begin position="281"/>
        <end position="301"/>
    </location>
</feature>
<feature type="transmembrane region" description="Helical" evidence="2">
    <location>
        <begin position="357"/>
        <end position="377"/>
    </location>
</feature>
<feature type="transmembrane region" description="Helical" evidence="2">
    <location>
        <begin position="413"/>
        <end position="433"/>
    </location>
</feature>
<feature type="transmembrane region" description="Helical" evidence="2">
    <location>
        <begin position="442"/>
        <end position="462"/>
    </location>
</feature>
<feature type="transmembrane region" description="Helical" evidence="2">
    <location>
        <begin position="531"/>
        <end position="551"/>
    </location>
</feature>
<feature type="transmembrane region" description="Helical" evidence="2">
    <location>
        <begin position="596"/>
        <end position="616"/>
    </location>
</feature>
<feature type="transmembrane region" description="Helical" evidence="2">
    <location>
        <begin position="644"/>
        <end position="664"/>
    </location>
</feature>
<feature type="transmembrane region" description="Helical" evidence="2">
    <location>
        <begin position="677"/>
        <end position="697"/>
    </location>
</feature>
<reference key="1">
    <citation type="journal article" date="1998" name="DNA Res.">
        <title>Structural analysis of Arabidopsis thaliana chromosome 5. VII. Sequence features of the regions of 1,013,767 bp covered by sixteen physically assigned P1 and TAC clones.</title>
        <authorList>
            <person name="Nakamura Y."/>
            <person name="Sato S."/>
            <person name="Asamizu E."/>
            <person name="Kaneko T."/>
            <person name="Kotani H."/>
            <person name="Miyajima N."/>
            <person name="Tabata S."/>
        </authorList>
    </citation>
    <scope>NUCLEOTIDE SEQUENCE [LARGE SCALE GENOMIC DNA]</scope>
    <source>
        <strain>cv. Columbia</strain>
    </source>
</reference>
<reference key="2">
    <citation type="journal article" date="2017" name="Plant J.">
        <title>Araport11: a complete reannotation of the Arabidopsis thaliana reference genome.</title>
        <authorList>
            <person name="Cheng C.Y."/>
            <person name="Krishnakumar V."/>
            <person name="Chan A.P."/>
            <person name="Thibaud-Nissen F."/>
            <person name="Schobel S."/>
            <person name="Town C.D."/>
        </authorList>
    </citation>
    <scope>GENOME REANNOTATION</scope>
    <source>
        <strain>cv. Columbia</strain>
    </source>
</reference>
<reference key="3">
    <citation type="journal article" date="2006" name="Plant Biotechnol. J.">
        <title>Simultaneous high-throughput recombinational cloning of open reading frames in closed and open configurations.</title>
        <authorList>
            <person name="Underwood B.A."/>
            <person name="Vanderhaeghen R."/>
            <person name="Whitford R."/>
            <person name="Town C.D."/>
            <person name="Hilson P."/>
        </authorList>
    </citation>
    <scope>NUCLEOTIDE SEQUENCE [LARGE SCALE MRNA]</scope>
    <source>
        <strain>cv. Columbia</strain>
    </source>
</reference>
<reference key="4">
    <citation type="journal article" date="2002" name="Plant Physiol.">
        <title>An oligopeptide transporter gene family in Arabidopsis.</title>
        <authorList>
            <person name="Koh S."/>
            <person name="Wiles A.M."/>
            <person name="Sharp J.S."/>
            <person name="Naider F.R."/>
            <person name="Becker J.M."/>
            <person name="Stacey G."/>
        </authorList>
    </citation>
    <scope>FUNCTION</scope>
    <scope>NOMENCLATURE</scope>
</reference>
<organism>
    <name type="scientific">Arabidopsis thaliana</name>
    <name type="common">Mouse-ear cress</name>
    <dbReference type="NCBI Taxonomy" id="3702"/>
    <lineage>
        <taxon>Eukaryota</taxon>
        <taxon>Viridiplantae</taxon>
        <taxon>Streptophyta</taxon>
        <taxon>Embryophyta</taxon>
        <taxon>Tracheophyta</taxon>
        <taxon>Spermatophyta</taxon>
        <taxon>Magnoliopsida</taxon>
        <taxon>eudicotyledons</taxon>
        <taxon>Gunneridae</taxon>
        <taxon>Pentapetalae</taxon>
        <taxon>rosids</taxon>
        <taxon>malvids</taxon>
        <taxon>Brassicales</taxon>
        <taxon>Brassicaceae</taxon>
        <taxon>Camelineae</taxon>
        <taxon>Arabidopsis</taxon>
    </lineage>
</organism>
<name>OPT8_ARATH</name>
<protein>
    <recommendedName>
        <fullName>Oligopeptide transporter 8</fullName>
        <shortName>AtOPT8</shortName>
    </recommendedName>
</protein>
<proteinExistence type="evidence at transcript level"/>
<accession>Q9FJD1</accession>
<accession>Q1PDJ8</accession>
<comment type="function">
    <text evidence="1 3">May be involved in the translocation of tetra- and pentapeptides across the cellular membrane in an energy-dependent manner.</text>
</comment>
<comment type="subcellular location">
    <subcellularLocation>
        <location evidence="4">Membrane</location>
        <topology evidence="4">Multi-pass membrane protein</topology>
    </subcellularLocation>
</comment>
<comment type="similarity">
    <text evidence="4">Belongs to the oligopeptide OPT transporter (TC 2.A.67.1) family.</text>
</comment>
<sequence>MKDFTDTISESECDDEISIVPQVELTVPKTDDPTSPTVTFRMWVLGITACVLLSFLNQFFWYRTNPLTISSVSAQIAVVPIGHLMAKVLPTRRFFEGTRWSFTMNPGPFSTKEHVLITVFANSGSGAVYATHILSAVKLYYKRRLDFLPALLVMITTQVLGFGWAGLYRKHLVEPGEMWWPSNLVQVSLFRALHEKENKSKWGISRNQFFVITLITSFSYYLLPGYLFTVLTTVSWLCWISPKSILVNQLGSGSAGLGIGSFGLDWSTIASYLGSPLASPFFASANIAAGFFLVMYVITPLCYYLDLYNAKTFPIYSGKLFVASGKEYKVTSIIDANFRLDRQAYAETGPVHMSTFFAVTYGLGFATLSASIFHVLIFNGKDLWTQTRGAFGKNKKMDIHTKIMKRNYKEVPLWWFLSIFAVNLAVIVFICIYYKTQIQLPWWGAFLACLIAIFFTPLVGVIMATTNQAPGLNIITEYIIGYAYPERPVANICFKTYGYISMSQSLTFLSDLKLGTYMKIPPRTMFMAQVVGTLVAVIAYAGTAWWLMAEIPNLCDTNLLPPGSQWTCPSDRVFFDASVIWGLVGPRRMFGDLGEYSNINWFFVGGAIAPALVYLASRLFPNKKWISDIHIPVLIGATAIMPPASAVNFTSWLVMAFVFGHFVFKYRREWWQRYNYVLSGGMDAGTGFMSVLLFLALQRSEIAIDWWGNSGEGCPVAKCPTAKGVVVHGCPVF</sequence>